<reference key="1">
    <citation type="journal article" date="2010" name="Nat. Biotechnol.">
        <title>Draft genome sequence of the oilseed species Ricinus communis.</title>
        <authorList>
            <person name="Chan A.P."/>
            <person name="Crabtree J."/>
            <person name="Zhao Q."/>
            <person name="Lorenzi H."/>
            <person name="Orvis J."/>
            <person name="Puiu D."/>
            <person name="Melake-Berhan A."/>
            <person name="Jones K.M."/>
            <person name="Redman J."/>
            <person name="Chen G."/>
            <person name="Cahoon E.B."/>
            <person name="Gedil M."/>
            <person name="Stanke M."/>
            <person name="Haas B.J."/>
            <person name="Wortman J.R."/>
            <person name="Fraser-Liggett C.M."/>
            <person name="Ravel J."/>
            <person name="Rabinowicz P.D."/>
        </authorList>
    </citation>
    <scope>NUCLEOTIDE SEQUENCE [LARGE SCALE GENOMIC DNA]</scope>
    <source>
        <strain>cv. Hale</strain>
    </source>
</reference>
<reference key="2">
    <citation type="journal article" date="2014" name="Plant Physiol.">
        <title>Functional and evolutionary analysis of the CASPARIAN STRIP MEMBRANE DOMAIN PROTEIN family.</title>
        <authorList>
            <person name="Roppolo D."/>
            <person name="Boeckmann B."/>
            <person name="Pfister A."/>
            <person name="Boutet E."/>
            <person name="Rubio M.C."/>
            <person name="Denervaud-Tendon V."/>
            <person name="Vermeer J.E."/>
            <person name="Gheyselinck J."/>
            <person name="Xenarios I."/>
            <person name="Geldner N."/>
        </authorList>
    </citation>
    <scope>GENE FAMILY</scope>
    <scope>NOMENCLATURE</scope>
</reference>
<gene>
    <name type="ORF">RCOM_1259260</name>
</gene>
<keyword id="KW-1003">Cell membrane</keyword>
<keyword id="KW-0961">Cell wall biogenesis/degradation</keyword>
<keyword id="KW-0325">Glycoprotein</keyword>
<keyword id="KW-0472">Membrane</keyword>
<keyword id="KW-1185">Reference proteome</keyword>
<keyword id="KW-0812">Transmembrane</keyword>
<keyword id="KW-1133">Transmembrane helix</keyword>
<name>CASP2_RICCO</name>
<proteinExistence type="evidence at transcript level"/>
<dbReference type="EMBL" id="EQ974214">
    <property type="protein sequence ID" value="EEF31864.1"/>
    <property type="molecule type" value="Genomic_DNA"/>
</dbReference>
<dbReference type="RefSeq" id="XP_002530532.1">
    <property type="nucleotide sequence ID" value="XM_002530486.2"/>
</dbReference>
<dbReference type="FunCoup" id="B9SX13">
    <property type="interactions" value="228"/>
</dbReference>
<dbReference type="STRING" id="3988.B9SX13"/>
<dbReference type="KEGG" id="rcu:8269727"/>
<dbReference type="eggNOG" id="ENOG502QZV7">
    <property type="taxonomic scope" value="Eukaryota"/>
</dbReference>
<dbReference type="InParanoid" id="B9SX13"/>
<dbReference type="OrthoDB" id="753675at2759"/>
<dbReference type="Proteomes" id="UP000008311">
    <property type="component" value="Unassembled WGS sequence"/>
</dbReference>
<dbReference type="GO" id="GO:0048226">
    <property type="term" value="C:Casparian strip"/>
    <property type="evidence" value="ECO:0000318"/>
    <property type="project" value="GO_Central"/>
</dbReference>
<dbReference type="GO" id="GO:0005886">
    <property type="term" value="C:plasma membrane"/>
    <property type="evidence" value="ECO:0000318"/>
    <property type="project" value="GO_Central"/>
</dbReference>
<dbReference type="GO" id="GO:0042545">
    <property type="term" value="P:cell wall modification"/>
    <property type="evidence" value="ECO:0000318"/>
    <property type="project" value="GO_Central"/>
</dbReference>
<dbReference type="GO" id="GO:0007043">
    <property type="term" value="P:cell-cell junction assembly"/>
    <property type="evidence" value="ECO:0000318"/>
    <property type="project" value="GO_Central"/>
</dbReference>
<dbReference type="InterPro" id="IPR006459">
    <property type="entry name" value="CASP/CASPL"/>
</dbReference>
<dbReference type="InterPro" id="IPR006702">
    <property type="entry name" value="CASP_dom"/>
</dbReference>
<dbReference type="InterPro" id="IPR044173">
    <property type="entry name" value="CASPL"/>
</dbReference>
<dbReference type="NCBIfam" id="TIGR01569">
    <property type="entry name" value="A_tha_TIGR01569"/>
    <property type="match status" value="1"/>
</dbReference>
<dbReference type="PANTHER" id="PTHR36488:SF11">
    <property type="entry name" value="CASP-LIKE PROTEIN"/>
    <property type="match status" value="1"/>
</dbReference>
<dbReference type="PANTHER" id="PTHR36488">
    <property type="entry name" value="CASP-LIKE PROTEIN 1U1"/>
    <property type="match status" value="1"/>
</dbReference>
<dbReference type="Pfam" id="PF04535">
    <property type="entry name" value="CASP_dom"/>
    <property type="match status" value="1"/>
</dbReference>
<comment type="function">
    <text evidence="1">Regulates membrane-cell wall junctions and localized cell wall deposition. Required for establishment of the Casparian strip membrane domain (CSD) and the subsequent formation of Casparian strips, a cell wall modification of the root endodermis that determines an apoplastic barrier between the intraorganismal apoplasm and the extraorganismal apoplasm and prevents lateral diffusion (By similarity).</text>
</comment>
<comment type="subunit">
    <text evidence="1">Homodimer and heterodimers.</text>
</comment>
<comment type="subcellular location">
    <subcellularLocation>
        <location evidence="1">Cell membrane</location>
        <topology evidence="1">Multi-pass membrane protein</topology>
    </subcellularLocation>
    <text evidence="1">Very restricted localization following a belt shape within the plasma membrane which coincides with the position of the Casparian strip membrane domain in the root endodermis.</text>
</comment>
<comment type="similarity">
    <text evidence="3">Belongs to the Casparian strip membrane proteins (CASP) family.</text>
</comment>
<protein>
    <recommendedName>
        <fullName>Casparian strip membrane protein 2</fullName>
        <shortName>RcCASP2</shortName>
    </recommendedName>
</protein>
<organism>
    <name type="scientific">Ricinus communis</name>
    <name type="common">Castor bean</name>
    <dbReference type="NCBI Taxonomy" id="3988"/>
    <lineage>
        <taxon>Eukaryota</taxon>
        <taxon>Viridiplantae</taxon>
        <taxon>Streptophyta</taxon>
        <taxon>Embryophyta</taxon>
        <taxon>Tracheophyta</taxon>
        <taxon>Spermatophyta</taxon>
        <taxon>Magnoliopsida</taxon>
        <taxon>eudicotyledons</taxon>
        <taxon>Gunneridae</taxon>
        <taxon>Pentapetalae</taxon>
        <taxon>rosids</taxon>
        <taxon>fabids</taxon>
        <taxon>Malpighiales</taxon>
        <taxon>Euphorbiaceae</taxon>
        <taxon>Acalyphoideae</taxon>
        <taxon>Acalypheae</taxon>
        <taxon>Ricinus</taxon>
    </lineage>
</organism>
<accession>B9SX13</accession>
<evidence type="ECO:0000250" key="1"/>
<evidence type="ECO:0000255" key="2"/>
<evidence type="ECO:0000305" key="3"/>
<feature type="chain" id="PRO_0000391536" description="Casparian strip membrane protein 2">
    <location>
        <begin position="1"/>
        <end position="200"/>
    </location>
</feature>
<feature type="topological domain" description="Cytoplasmic" evidence="2">
    <location>
        <begin position="1"/>
        <end position="37"/>
    </location>
</feature>
<feature type="transmembrane region" description="Helical" evidence="2">
    <location>
        <begin position="38"/>
        <end position="58"/>
    </location>
</feature>
<feature type="topological domain" description="Extracellular" evidence="2">
    <location>
        <begin position="59"/>
        <end position="88"/>
    </location>
</feature>
<feature type="transmembrane region" description="Helical" evidence="2">
    <location>
        <begin position="89"/>
        <end position="109"/>
    </location>
</feature>
<feature type="topological domain" description="Cytoplasmic" evidence="2">
    <location>
        <begin position="110"/>
        <end position="121"/>
    </location>
</feature>
<feature type="transmembrane region" description="Helical" evidence="2">
    <location>
        <begin position="122"/>
        <end position="142"/>
    </location>
</feature>
<feature type="topological domain" description="Extracellular" evidence="2">
    <location>
        <begin position="143"/>
        <end position="175"/>
    </location>
</feature>
<feature type="transmembrane region" description="Helical" evidence="2">
    <location>
        <begin position="176"/>
        <end position="196"/>
    </location>
</feature>
<feature type="topological domain" description="Cytoplasmic" evidence="2">
    <location>
        <begin position="197"/>
        <end position="200"/>
    </location>
</feature>
<feature type="glycosylation site" description="N-linked (GlcNAc...) asparagine" evidence="2">
    <location>
        <position position="153"/>
    </location>
</feature>
<sequence length="200" mass="21399">MMKSDSVAIDVPESSSVAKRKAPFMANIRDENGGYKKGLAIFDFILRLGAIAAALGAASTMGTSDETLPFFTQFFQFNAGYDDFPTFQFFVIAMAMVAGYLVLSLPFSIVSICRPHAAGPRILLFILDTVALTLNAAAGAAAADIVYLAHNGNQTTNWLAICLQFGDFCREVSGSVVASFASVVILMVLVVMSGLALRRY</sequence>